<keyword id="KW-0067">ATP-binding</keyword>
<keyword id="KW-0315">Glutamine amidotransferase</keyword>
<keyword id="KW-0332">GMP biosynthesis</keyword>
<keyword id="KW-0436">Ligase</keyword>
<keyword id="KW-0547">Nucleotide-binding</keyword>
<keyword id="KW-0658">Purine biosynthesis</keyword>
<proteinExistence type="inferred from homology"/>
<name>GUAA_YERPB</name>
<protein>
    <recommendedName>
        <fullName evidence="1">GMP synthase [glutamine-hydrolyzing]</fullName>
        <ecNumber evidence="1">6.3.5.2</ecNumber>
    </recommendedName>
    <alternativeName>
        <fullName evidence="1">GMP synthetase</fullName>
    </alternativeName>
    <alternativeName>
        <fullName evidence="1">Glutamine amidotransferase</fullName>
    </alternativeName>
</protein>
<evidence type="ECO:0000255" key="1">
    <source>
        <dbReference type="HAMAP-Rule" id="MF_00344"/>
    </source>
</evidence>
<organism>
    <name type="scientific">Yersinia pseudotuberculosis serotype IB (strain PB1/+)</name>
    <dbReference type="NCBI Taxonomy" id="502801"/>
    <lineage>
        <taxon>Bacteria</taxon>
        <taxon>Pseudomonadati</taxon>
        <taxon>Pseudomonadota</taxon>
        <taxon>Gammaproteobacteria</taxon>
        <taxon>Enterobacterales</taxon>
        <taxon>Yersiniaceae</taxon>
        <taxon>Yersinia</taxon>
    </lineage>
</organism>
<accession>B2K9P0</accession>
<feature type="chain" id="PRO_1000120459" description="GMP synthase [glutamine-hydrolyzing]">
    <location>
        <begin position="1"/>
        <end position="525"/>
    </location>
</feature>
<feature type="domain" description="Glutamine amidotransferase type-1" evidence="1">
    <location>
        <begin position="9"/>
        <end position="207"/>
    </location>
</feature>
<feature type="domain" description="GMPS ATP-PPase" evidence="1">
    <location>
        <begin position="208"/>
        <end position="400"/>
    </location>
</feature>
<feature type="active site" description="Nucleophile" evidence="1">
    <location>
        <position position="86"/>
    </location>
</feature>
<feature type="active site" evidence="1">
    <location>
        <position position="181"/>
    </location>
</feature>
<feature type="active site" evidence="1">
    <location>
        <position position="183"/>
    </location>
</feature>
<feature type="binding site" evidence="1">
    <location>
        <begin position="235"/>
        <end position="241"/>
    </location>
    <ligand>
        <name>ATP</name>
        <dbReference type="ChEBI" id="CHEBI:30616"/>
    </ligand>
</feature>
<dbReference type="EC" id="6.3.5.2" evidence="1"/>
<dbReference type="EMBL" id="CP001048">
    <property type="protein sequence ID" value="ACC89897.1"/>
    <property type="molecule type" value="Genomic_DNA"/>
</dbReference>
<dbReference type="RefSeq" id="WP_011192796.1">
    <property type="nucleotide sequence ID" value="NZ_CP009780.1"/>
</dbReference>
<dbReference type="SMR" id="B2K9P0"/>
<dbReference type="MEROPS" id="C26.957"/>
<dbReference type="GeneID" id="49785158"/>
<dbReference type="KEGG" id="ypb:YPTS_2940"/>
<dbReference type="PATRIC" id="fig|502801.10.peg.2369"/>
<dbReference type="UniPathway" id="UPA00189">
    <property type="reaction ID" value="UER00296"/>
</dbReference>
<dbReference type="GO" id="GO:0005829">
    <property type="term" value="C:cytosol"/>
    <property type="evidence" value="ECO:0007669"/>
    <property type="project" value="TreeGrafter"/>
</dbReference>
<dbReference type="GO" id="GO:0005524">
    <property type="term" value="F:ATP binding"/>
    <property type="evidence" value="ECO:0007669"/>
    <property type="project" value="UniProtKB-UniRule"/>
</dbReference>
<dbReference type="GO" id="GO:0003921">
    <property type="term" value="F:GMP synthase activity"/>
    <property type="evidence" value="ECO:0007669"/>
    <property type="project" value="InterPro"/>
</dbReference>
<dbReference type="CDD" id="cd01742">
    <property type="entry name" value="GATase1_GMP_Synthase"/>
    <property type="match status" value="1"/>
</dbReference>
<dbReference type="CDD" id="cd01997">
    <property type="entry name" value="GMP_synthase_C"/>
    <property type="match status" value="1"/>
</dbReference>
<dbReference type="FunFam" id="3.30.300.10:FF:000002">
    <property type="entry name" value="GMP synthase [glutamine-hydrolyzing]"/>
    <property type="match status" value="1"/>
</dbReference>
<dbReference type="FunFam" id="3.40.50.620:FF:000001">
    <property type="entry name" value="GMP synthase [glutamine-hydrolyzing]"/>
    <property type="match status" value="1"/>
</dbReference>
<dbReference type="FunFam" id="3.40.50.880:FF:000001">
    <property type="entry name" value="GMP synthase [glutamine-hydrolyzing]"/>
    <property type="match status" value="1"/>
</dbReference>
<dbReference type="Gene3D" id="3.30.300.10">
    <property type="match status" value="1"/>
</dbReference>
<dbReference type="Gene3D" id="3.40.50.880">
    <property type="match status" value="1"/>
</dbReference>
<dbReference type="Gene3D" id="3.40.50.620">
    <property type="entry name" value="HUPs"/>
    <property type="match status" value="1"/>
</dbReference>
<dbReference type="HAMAP" id="MF_00344">
    <property type="entry name" value="GMP_synthase"/>
    <property type="match status" value="1"/>
</dbReference>
<dbReference type="InterPro" id="IPR029062">
    <property type="entry name" value="Class_I_gatase-like"/>
</dbReference>
<dbReference type="InterPro" id="IPR017926">
    <property type="entry name" value="GATASE"/>
</dbReference>
<dbReference type="InterPro" id="IPR001674">
    <property type="entry name" value="GMP_synth_C"/>
</dbReference>
<dbReference type="InterPro" id="IPR004739">
    <property type="entry name" value="GMP_synth_GATase"/>
</dbReference>
<dbReference type="InterPro" id="IPR022955">
    <property type="entry name" value="GMP_synthase"/>
</dbReference>
<dbReference type="InterPro" id="IPR025777">
    <property type="entry name" value="GMPS_ATP_PPase_dom"/>
</dbReference>
<dbReference type="InterPro" id="IPR022310">
    <property type="entry name" value="NAD/GMP_synthase"/>
</dbReference>
<dbReference type="InterPro" id="IPR014729">
    <property type="entry name" value="Rossmann-like_a/b/a_fold"/>
</dbReference>
<dbReference type="NCBIfam" id="TIGR00884">
    <property type="entry name" value="guaA_Cterm"/>
    <property type="match status" value="1"/>
</dbReference>
<dbReference type="NCBIfam" id="TIGR00888">
    <property type="entry name" value="guaA_Nterm"/>
    <property type="match status" value="1"/>
</dbReference>
<dbReference type="NCBIfam" id="NF000848">
    <property type="entry name" value="PRK00074.1"/>
    <property type="match status" value="1"/>
</dbReference>
<dbReference type="PANTHER" id="PTHR11922:SF2">
    <property type="entry name" value="GMP SYNTHASE [GLUTAMINE-HYDROLYZING]"/>
    <property type="match status" value="1"/>
</dbReference>
<dbReference type="PANTHER" id="PTHR11922">
    <property type="entry name" value="GMP SYNTHASE-RELATED"/>
    <property type="match status" value="1"/>
</dbReference>
<dbReference type="Pfam" id="PF00117">
    <property type="entry name" value="GATase"/>
    <property type="match status" value="1"/>
</dbReference>
<dbReference type="Pfam" id="PF00958">
    <property type="entry name" value="GMP_synt_C"/>
    <property type="match status" value="1"/>
</dbReference>
<dbReference type="Pfam" id="PF02540">
    <property type="entry name" value="NAD_synthase"/>
    <property type="match status" value="1"/>
</dbReference>
<dbReference type="PRINTS" id="PR00097">
    <property type="entry name" value="ANTSNTHASEII"/>
</dbReference>
<dbReference type="PRINTS" id="PR00096">
    <property type="entry name" value="GATASE"/>
</dbReference>
<dbReference type="SUPFAM" id="SSF52402">
    <property type="entry name" value="Adenine nucleotide alpha hydrolases-like"/>
    <property type="match status" value="1"/>
</dbReference>
<dbReference type="SUPFAM" id="SSF52317">
    <property type="entry name" value="Class I glutamine amidotransferase-like"/>
    <property type="match status" value="1"/>
</dbReference>
<dbReference type="SUPFAM" id="SSF54810">
    <property type="entry name" value="GMP synthetase C-terminal dimerisation domain"/>
    <property type="match status" value="1"/>
</dbReference>
<dbReference type="PROSITE" id="PS51273">
    <property type="entry name" value="GATASE_TYPE_1"/>
    <property type="match status" value="1"/>
</dbReference>
<dbReference type="PROSITE" id="PS51553">
    <property type="entry name" value="GMPS_ATP_PPASE"/>
    <property type="match status" value="1"/>
</dbReference>
<gene>
    <name evidence="1" type="primary">guaA</name>
    <name type="ordered locus">YPTS_2940</name>
</gene>
<reference key="1">
    <citation type="submission" date="2008-04" db="EMBL/GenBank/DDBJ databases">
        <title>Complete sequence of Yersinia pseudotuberculosis PB1/+.</title>
        <authorList>
            <person name="Copeland A."/>
            <person name="Lucas S."/>
            <person name="Lapidus A."/>
            <person name="Glavina del Rio T."/>
            <person name="Dalin E."/>
            <person name="Tice H."/>
            <person name="Bruce D."/>
            <person name="Goodwin L."/>
            <person name="Pitluck S."/>
            <person name="Munk A.C."/>
            <person name="Brettin T."/>
            <person name="Detter J.C."/>
            <person name="Han C."/>
            <person name="Tapia R."/>
            <person name="Schmutz J."/>
            <person name="Larimer F."/>
            <person name="Land M."/>
            <person name="Hauser L."/>
            <person name="Challacombe J.F."/>
            <person name="Green L."/>
            <person name="Lindler L.E."/>
            <person name="Nikolich M.P."/>
            <person name="Richardson P."/>
        </authorList>
    </citation>
    <scope>NUCLEOTIDE SEQUENCE [LARGE SCALE GENOMIC DNA]</scope>
    <source>
        <strain>PB1/+</strain>
    </source>
</reference>
<comment type="function">
    <text evidence="1">Catalyzes the synthesis of GMP from XMP.</text>
</comment>
<comment type="catalytic activity">
    <reaction evidence="1">
        <text>XMP + L-glutamine + ATP + H2O = GMP + L-glutamate + AMP + diphosphate + 2 H(+)</text>
        <dbReference type="Rhea" id="RHEA:11680"/>
        <dbReference type="ChEBI" id="CHEBI:15377"/>
        <dbReference type="ChEBI" id="CHEBI:15378"/>
        <dbReference type="ChEBI" id="CHEBI:29985"/>
        <dbReference type="ChEBI" id="CHEBI:30616"/>
        <dbReference type="ChEBI" id="CHEBI:33019"/>
        <dbReference type="ChEBI" id="CHEBI:57464"/>
        <dbReference type="ChEBI" id="CHEBI:58115"/>
        <dbReference type="ChEBI" id="CHEBI:58359"/>
        <dbReference type="ChEBI" id="CHEBI:456215"/>
        <dbReference type="EC" id="6.3.5.2"/>
    </reaction>
</comment>
<comment type="pathway">
    <text evidence="1">Purine metabolism; GMP biosynthesis; GMP from XMP (L-Gln route): step 1/1.</text>
</comment>
<comment type="subunit">
    <text evidence="1">Homodimer.</text>
</comment>
<sequence>MTKNIHKHRILILDFGSQYTQLLARRVREIGVYCELWAWDVTEAQIREFNPSGIILSGSPESTIENGSPRAPDYVFTAGVPVLGVCYGMQTMAIQLGGKVESSNQREFGYAQVEIKADSALIRDIKDAINPAGEAVLDVWMSHGDKVAEIPADFVTVASTDTCPFAIMANEEKRFYGVQFHPEVTHTKQGLRLLERFVLGICGCEALWTSATIIEDAIVRLREQIGDDHVILGLSGGVDSSVTAMLLHRAIGKRLTCVFVDNGLLRLNEADQVLEMFGDKFGLNIVHVAAEDRFLSALAGVDEPEAKRKIIGRVFVELFDEEACKQEQVKWLAQGTIYPDVIESAASATGKAHVIKSHHNVGGLPKEMKLGLVEPLKELFKDEVRKIGLELGLPYDMLYRHPFPGPGLGVRVLGEVKKEYCDLLRRADAIFIEELHKADLYNKVSQAFTVFLPVRSVGVMGDGRKYDWVVSLRAVETVDFMTAHWAHLPYDFLGRVSNRIINEVNGISRVVYDISGKPPATIEWE</sequence>